<dbReference type="EMBL" id="CP000378">
    <property type="protein sequence ID" value="ABF77304.1"/>
    <property type="molecule type" value="Genomic_DNA"/>
</dbReference>
<dbReference type="SMR" id="Q1BSV1"/>
<dbReference type="HOGENOM" id="CLU_069313_0_0_4"/>
<dbReference type="GO" id="GO:0009427">
    <property type="term" value="C:bacterial-type flagellum basal body, distal rod, L ring"/>
    <property type="evidence" value="ECO:0007669"/>
    <property type="project" value="InterPro"/>
</dbReference>
<dbReference type="GO" id="GO:0009279">
    <property type="term" value="C:cell outer membrane"/>
    <property type="evidence" value="ECO:0007669"/>
    <property type="project" value="UniProtKB-SubCell"/>
</dbReference>
<dbReference type="GO" id="GO:0003774">
    <property type="term" value="F:cytoskeletal motor activity"/>
    <property type="evidence" value="ECO:0007669"/>
    <property type="project" value="InterPro"/>
</dbReference>
<dbReference type="GO" id="GO:0071973">
    <property type="term" value="P:bacterial-type flagellum-dependent cell motility"/>
    <property type="evidence" value="ECO:0007669"/>
    <property type="project" value="InterPro"/>
</dbReference>
<dbReference type="HAMAP" id="MF_00415">
    <property type="entry name" value="FlgH"/>
    <property type="match status" value="1"/>
</dbReference>
<dbReference type="InterPro" id="IPR000527">
    <property type="entry name" value="Flag_Lring"/>
</dbReference>
<dbReference type="NCBIfam" id="NF009337">
    <property type="entry name" value="PRK12697.1"/>
    <property type="match status" value="1"/>
</dbReference>
<dbReference type="PANTHER" id="PTHR34933">
    <property type="entry name" value="FLAGELLAR L-RING PROTEIN"/>
    <property type="match status" value="1"/>
</dbReference>
<dbReference type="PANTHER" id="PTHR34933:SF3">
    <property type="entry name" value="FLAGELLAR L-RING PROTEIN"/>
    <property type="match status" value="1"/>
</dbReference>
<dbReference type="Pfam" id="PF02107">
    <property type="entry name" value="FlgH"/>
    <property type="match status" value="1"/>
</dbReference>
<dbReference type="PRINTS" id="PR01008">
    <property type="entry name" value="FLGLRINGFLGH"/>
</dbReference>
<dbReference type="PROSITE" id="PS51257">
    <property type="entry name" value="PROKAR_LIPOPROTEIN"/>
    <property type="match status" value="1"/>
</dbReference>
<accession>Q1BSV1</accession>
<protein>
    <recommendedName>
        <fullName evidence="1">Flagellar L-ring protein</fullName>
    </recommendedName>
    <alternativeName>
        <fullName evidence="1">Basal body L-ring protein</fullName>
    </alternativeName>
</protein>
<name>FLGH_BURO1</name>
<sequence>MKQVRLPSSATVRAACAVAVAALAGCAQIPRDPIIQQPMTAQPPMPMSMQAPGSIYNPGYAGRPLFEDQRPRNIGDILTIMIAENINATKSSGANTNRQGNTDFNVPTAGFLGGLFAKANLSATGANKFAATGGASAANTFNGTITVTVTNVLPNGNLVVSGEKQMLINQGNEFVRFSGVVNPNTISGANSVYSTQVADAKIEYSSKGYINEAETMGWLQRFFLNIAPW</sequence>
<comment type="function">
    <text evidence="1">Assembles around the rod to form the L-ring and probably protects the motor/basal body from shearing forces during rotation.</text>
</comment>
<comment type="subunit">
    <text evidence="1">The basal body constitutes a major portion of the flagellar organelle and consists of four rings (L,P,S, and M) mounted on a central rod.</text>
</comment>
<comment type="subcellular location">
    <subcellularLocation>
        <location evidence="1">Cell outer membrane</location>
        <topology evidence="1">Lipid-anchor</topology>
    </subcellularLocation>
    <subcellularLocation>
        <location evidence="1">Bacterial flagellum basal body</location>
    </subcellularLocation>
</comment>
<comment type="similarity">
    <text evidence="1">Belongs to the FlgH family.</text>
</comment>
<feature type="signal peptide" evidence="1">
    <location>
        <begin position="1"/>
        <end position="25"/>
    </location>
</feature>
<feature type="chain" id="PRO_1000050081" description="Flagellar L-ring protein">
    <location>
        <begin position="26"/>
        <end position="229"/>
    </location>
</feature>
<feature type="lipid moiety-binding region" description="N-palmitoyl cysteine" evidence="1">
    <location>
        <position position="26"/>
    </location>
</feature>
<feature type="lipid moiety-binding region" description="S-diacylglycerol cysteine" evidence="1">
    <location>
        <position position="26"/>
    </location>
</feature>
<evidence type="ECO:0000255" key="1">
    <source>
        <dbReference type="HAMAP-Rule" id="MF_00415"/>
    </source>
</evidence>
<proteinExistence type="inferred from homology"/>
<organism>
    <name type="scientific">Burkholderia orbicola (strain AU 1054)</name>
    <dbReference type="NCBI Taxonomy" id="331271"/>
    <lineage>
        <taxon>Bacteria</taxon>
        <taxon>Pseudomonadati</taxon>
        <taxon>Pseudomonadota</taxon>
        <taxon>Betaproteobacteria</taxon>
        <taxon>Burkholderiales</taxon>
        <taxon>Burkholderiaceae</taxon>
        <taxon>Burkholderia</taxon>
        <taxon>Burkholderia cepacia complex</taxon>
        <taxon>Burkholderia orbicola</taxon>
    </lineage>
</organism>
<keyword id="KW-0975">Bacterial flagellum</keyword>
<keyword id="KW-0998">Cell outer membrane</keyword>
<keyword id="KW-0449">Lipoprotein</keyword>
<keyword id="KW-0472">Membrane</keyword>
<keyword id="KW-0564">Palmitate</keyword>
<keyword id="KW-0732">Signal</keyword>
<gene>
    <name evidence="1" type="primary">flgH</name>
    <name type="ordered locus">Bcen_2405</name>
</gene>
<reference key="1">
    <citation type="submission" date="2006-05" db="EMBL/GenBank/DDBJ databases">
        <title>Complete sequence of chromosome 1 of Burkholderia cenocepacia AU 1054.</title>
        <authorList>
            <consortium name="US DOE Joint Genome Institute"/>
            <person name="Copeland A."/>
            <person name="Lucas S."/>
            <person name="Lapidus A."/>
            <person name="Barry K."/>
            <person name="Detter J.C."/>
            <person name="Glavina del Rio T."/>
            <person name="Hammon N."/>
            <person name="Israni S."/>
            <person name="Dalin E."/>
            <person name="Tice H."/>
            <person name="Pitluck S."/>
            <person name="Chain P."/>
            <person name="Malfatti S."/>
            <person name="Shin M."/>
            <person name="Vergez L."/>
            <person name="Schmutz J."/>
            <person name="Larimer F."/>
            <person name="Land M."/>
            <person name="Hauser L."/>
            <person name="Kyrpides N."/>
            <person name="Lykidis A."/>
            <person name="LiPuma J.J."/>
            <person name="Konstantinidis K."/>
            <person name="Tiedje J.M."/>
            <person name="Richardson P."/>
        </authorList>
    </citation>
    <scope>NUCLEOTIDE SEQUENCE [LARGE SCALE GENOMIC DNA]</scope>
    <source>
        <strain>AU 1054</strain>
    </source>
</reference>